<feature type="chain" id="PRO_0000229888" description="23S rRNA (uracil(1939)-C(5))-methyltransferase RlmD">
    <location>
        <begin position="1"/>
        <end position="444"/>
    </location>
</feature>
<feature type="domain" description="TRAM" evidence="1">
    <location>
        <begin position="5"/>
        <end position="67"/>
    </location>
</feature>
<feature type="active site" description="Nucleophile" evidence="1">
    <location>
        <position position="400"/>
    </location>
</feature>
<feature type="binding site" evidence="1">
    <location>
        <position position="80"/>
    </location>
    <ligand>
        <name>[4Fe-4S] cluster</name>
        <dbReference type="ChEBI" id="CHEBI:49883"/>
    </ligand>
</feature>
<feature type="binding site" evidence="1">
    <location>
        <position position="86"/>
    </location>
    <ligand>
        <name>[4Fe-4S] cluster</name>
        <dbReference type="ChEBI" id="CHEBI:49883"/>
    </ligand>
</feature>
<feature type="binding site" evidence="1">
    <location>
        <position position="89"/>
    </location>
    <ligand>
        <name>[4Fe-4S] cluster</name>
        <dbReference type="ChEBI" id="CHEBI:49883"/>
    </ligand>
</feature>
<feature type="binding site" evidence="1">
    <location>
        <position position="168"/>
    </location>
    <ligand>
        <name>[4Fe-4S] cluster</name>
        <dbReference type="ChEBI" id="CHEBI:49883"/>
    </ligand>
</feature>
<feature type="binding site" evidence="1">
    <location>
        <position position="276"/>
    </location>
    <ligand>
        <name>S-adenosyl-L-methionine</name>
        <dbReference type="ChEBI" id="CHEBI:59789"/>
    </ligand>
</feature>
<feature type="binding site" evidence="1">
    <location>
        <position position="305"/>
    </location>
    <ligand>
        <name>S-adenosyl-L-methionine</name>
        <dbReference type="ChEBI" id="CHEBI:59789"/>
    </ligand>
</feature>
<feature type="binding site" evidence="1">
    <location>
        <position position="310"/>
    </location>
    <ligand>
        <name>S-adenosyl-L-methionine</name>
        <dbReference type="ChEBI" id="CHEBI:59789"/>
    </ligand>
</feature>
<feature type="binding site" evidence="1">
    <location>
        <position position="326"/>
    </location>
    <ligand>
        <name>S-adenosyl-L-methionine</name>
        <dbReference type="ChEBI" id="CHEBI:59789"/>
    </ligand>
</feature>
<feature type="binding site" evidence="1">
    <location>
        <position position="353"/>
    </location>
    <ligand>
        <name>S-adenosyl-L-methionine</name>
        <dbReference type="ChEBI" id="CHEBI:59789"/>
    </ligand>
</feature>
<feature type="binding site" evidence="1">
    <location>
        <position position="374"/>
    </location>
    <ligand>
        <name>S-adenosyl-L-methionine</name>
        <dbReference type="ChEBI" id="CHEBI:59789"/>
    </ligand>
</feature>
<protein>
    <recommendedName>
        <fullName evidence="1">23S rRNA (uracil(1939)-C(5))-methyltransferase RlmD</fullName>
        <ecNumber evidence="1">2.1.1.190</ecNumber>
    </recommendedName>
    <alternativeName>
        <fullName evidence="1">23S rRNA(m5U1939)-methyltransferase</fullName>
    </alternativeName>
</protein>
<keyword id="KW-0004">4Fe-4S</keyword>
<keyword id="KW-0408">Iron</keyword>
<keyword id="KW-0411">Iron-sulfur</keyword>
<keyword id="KW-0479">Metal-binding</keyword>
<keyword id="KW-0489">Methyltransferase</keyword>
<keyword id="KW-0698">rRNA processing</keyword>
<keyword id="KW-0949">S-adenosyl-L-methionine</keyword>
<keyword id="KW-0808">Transferase</keyword>
<gene>
    <name evidence="1" type="primary">rlmD</name>
    <name type="synonym">rumA</name>
    <name type="ordered locus">XC_2964</name>
</gene>
<name>RLMD_XANC8</name>
<organism>
    <name type="scientific">Xanthomonas campestris pv. campestris (strain 8004)</name>
    <dbReference type="NCBI Taxonomy" id="314565"/>
    <lineage>
        <taxon>Bacteria</taxon>
        <taxon>Pseudomonadati</taxon>
        <taxon>Pseudomonadota</taxon>
        <taxon>Gammaproteobacteria</taxon>
        <taxon>Lysobacterales</taxon>
        <taxon>Lysobacteraceae</taxon>
        <taxon>Xanthomonas</taxon>
    </lineage>
</organism>
<reference key="1">
    <citation type="journal article" date="2005" name="Genome Res.">
        <title>Comparative and functional genomic analyses of the pathogenicity of phytopathogen Xanthomonas campestris pv. campestris.</title>
        <authorList>
            <person name="Qian W."/>
            <person name="Jia Y."/>
            <person name="Ren S.-X."/>
            <person name="He Y.-Q."/>
            <person name="Feng J.-X."/>
            <person name="Lu L.-F."/>
            <person name="Sun Q."/>
            <person name="Ying G."/>
            <person name="Tang D.-J."/>
            <person name="Tang H."/>
            <person name="Wu W."/>
            <person name="Hao P."/>
            <person name="Wang L."/>
            <person name="Jiang B.-L."/>
            <person name="Zeng S."/>
            <person name="Gu W.-Y."/>
            <person name="Lu G."/>
            <person name="Rong L."/>
            <person name="Tian Y."/>
            <person name="Yao Z."/>
            <person name="Fu G."/>
            <person name="Chen B."/>
            <person name="Fang R."/>
            <person name="Qiang B."/>
            <person name="Chen Z."/>
            <person name="Zhao G.-P."/>
            <person name="Tang J.-L."/>
            <person name="He C."/>
        </authorList>
    </citation>
    <scope>NUCLEOTIDE SEQUENCE [LARGE SCALE GENOMIC DNA]</scope>
    <source>
        <strain>8004</strain>
    </source>
</reference>
<sequence>MARSRNRFDRTPFQTAITDLSHDGRGVARRDGEGGKVTFISGALPGEVVVAEPTARSRHFDEAKTVEVLQASPQRVAPRCPHFGVCAGCVLQHLEESQQIVAKQRVLMDNLERIGHVTPQTVLPALVGDTWGYRRKGRFSVRRVEKKDKTLVGFRELDPRFVADLSVCYTVIPQIGEKIPQLAALVEGMDGKRDIPQIEFIAGDDAVALTIRHLQPLSARDEQALVEFAQAHDFAIFLQPGGVDSVHPLWPQEVPLSFRLPKWDVELAFRPLDFIQVNASLNQKMIAHALALLDAKPDDRVLDLFCGLGNFTLPLARTVREVVGVEGDAGLVARARENAQRNGLDNAQFYAADLTQDQRQTAWMRQGFDKLLLDPPRSGAIDVLQQLPLKQFKRIVYVSCHPGSLARDAGYLVNEQGFSLLSAGAMDMFPHTAHVESIAVFEKR</sequence>
<dbReference type="EC" id="2.1.1.190" evidence="1"/>
<dbReference type="EMBL" id="CP000050">
    <property type="protein sequence ID" value="AAY50012.1"/>
    <property type="molecule type" value="Genomic_DNA"/>
</dbReference>
<dbReference type="RefSeq" id="WP_011036471.1">
    <property type="nucleotide sequence ID" value="NZ_CP155948.1"/>
</dbReference>
<dbReference type="SMR" id="Q4USG1"/>
<dbReference type="KEGG" id="xcb:XC_2964"/>
<dbReference type="HOGENOM" id="CLU_014689_8_2_6"/>
<dbReference type="Proteomes" id="UP000000420">
    <property type="component" value="Chromosome"/>
</dbReference>
<dbReference type="GO" id="GO:0051539">
    <property type="term" value="F:4 iron, 4 sulfur cluster binding"/>
    <property type="evidence" value="ECO:0007669"/>
    <property type="project" value="UniProtKB-KW"/>
</dbReference>
<dbReference type="GO" id="GO:0005506">
    <property type="term" value="F:iron ion binding"/>
    <property type="evidence" value="ECO:0007669"/>
    <property type="project" value="UniProtKB-UniRule"/>
</dbReference>
<dbReference type="GO" id="GO:0003723">
    <property type="term" value="F:RNA binding"/>
    <property type="evidence" value="ECO:0007669"/>
    <property type="project" value="InterPro"/>
</dbReference>
<dbReference type="GO" id="GO:0070041">
    <property type="term" value="F:rRNA (uridine-C5-)-methyltransferase activity"/>
    <property type="evidence" value="ECO:0007669"/>
    <property type="project" value="UniProtKB-UniRule"/>
</dbReference>
<dbReference type="GO" id="GO:0070475">
    <property type="term" value="P:rRNA base methylation"/>
    <property type="evidence" value="ECO:0007669"/>
    <property type="project" value="TreeGrafter"/>
</dbReference>
<dbReference type="CDD" id="cd02440">
    <property type="entry name" value="AdoMet_MTases"/>
    <property type="match status" value="1"/>
</dbReference>
<dbReference type="FunFam" id="3.40.50.150:FF:000009">
    <property type="entry name" value="23S rRNA (Uracil(1939)-C(5))-methyltransferase RlmD"/>
    <property type="match status" value="1"/>
</dbReference>
<dbReference type="FunFam" id="2.40.50.1070:FF:000006">
    <property type="entry name" value="23S rRNA (uracil(1939)-C(5))-methyltransferase RlmD"/>
    <property type="match status" value="1"/>
</dbReference>
<dbReference type="FunFam" id="2.40.50.140:FF:000097">
    <property type="entry name" value="23S rRNA (uracil(1939)-C(5))-methyltransferase RlmD"/>
    <property type="match status" value="1"/>
</dbReference>
<dbReference type="Gene3D" id="2.40.50.1070">
    <property type="match status" value="1"/>
</dbReference>
<dbReference type="Gene3D" id="2.40.50.140">
    <property type="entry name" value="Nucleic acid-binding proteins"/>
    <property type="match status" value="1"/>
</dbReference>
<dbReference type="Gene3D" id="3.40.50.150">
    <property type="entry name" value="Vaccinia Virus protein VP39"/>
    <property type="match status" value="1"/>
</dbReference>
<dbReference type="HAMAP" id="MF_01010">
    <property type="entry name" value="23SrRNA_methyltr_RlmD"/>
    <property type="match status" value="1"/>
</dbReference>
<dbReference type="InterPro" id="IPR001566">
    <property type="entry name" value="23S_rRNA_MeTrfase_RlmD"/>
</dbReference>
<dbReference type="InterPro" id="IPR030390">
    <property type="entry name" value="MeTrfase_TrmA_AS"/>
</dbReference>
<dbReference type="InterPro" id="IPR030391">
    <property type="entry name" value="MeTrfase_TrmA_CS"/>
</dbReference>
<dbReference type="InterPro" id="IPR012340">
    <property type="entry name" value="NA-bd_OB-fold"/>
</dbReference>
<dbReference type="InterPro" id="IPR029063">
    <property type="entry name" value="SAM-dependent_MTases_sf"/>
</dbReference>
<dbReference type="InterPro" id="IPR002792">
    <property type="entry name" value="TRAM_dom"/>
</dbReference>
<dbReference type="InterPro" id="IPR010280">
    <property type="entry name" value="U5_MeTrfase_fam"/>
</dbReference>
<dbReference type="NCBIfam" id="NF009639">
    <property type="entry name" value="PRK13168.1"/>
    <property type="match status" value="1"/>
</dbReference>
<dbReference type="NCBIfam" id="TIGR00479">
    <property type="entry name" value="rumA"/>
    <property type="match status" value="1"/>
</dbReference>
<dbReference type="PANTHER" id="PTHR11061:SF49">
    <property type="entry name" value="23S RRNA (URACIL(1939)-C(5))-METHYLTRANSFERASE RLMD"/>
    <property type="match status" value="1"/>
</dbReference>
<dbReference type="PANTHER" id="PTHR11061">
    <property type="entry name" value="RNA M5U METHYLTRANSFERASE"/>
    <property type="match status" value="1"/>
</dbReference>
<dbReference type="Pfam" id="PF01938">
    <property type="entry name" value="TRAM"/>
    <property type="match status" value="1"/>
</dbReference>
<dbReference type="Pfam" id="PF05958">
    <property type="entry name" value="tRNA_U5-meth_tr"/>
    <property type="match status" value="1"/>
</dbReference>
<dbReference type="SUPFAM" id="SSF50249">
    <property type="entry name" value="Nucleic acid-binding proteins"/>
    <property type="match status" value="1"/>
</dbReference>
<dbReference type="SUPFAM" id="SSF53335">
    <property type="entry name" value="S-adenosyl-L-methionine-dependent methyltransferases"/>
    <property type="match status" value="1"/>
</dbReference>
<dbReference type="PROSITE" id="PS51687">
    <property type="entry name" value="SAM_MT_RNA_M5U"/>
    <property type="match status" value="1"/>
</dbReference>
<dbReference type="PROSITE" id="PS50926">
    <property type="entry name" value="TRAM"/>
    <property type="match status" value="1"/>
</dbReference>
<dbReference type="PROSITE" id="PS01230">
    <property type="entry name" value="TRMA_1"/>
    <property type="match status" value="1"/>
</dbReference>
<dbReference type="PROSITE" id="PS01231">
    <property type="entry name" value="TRMA_2"/>
    <property type="match status" value="1"/>
</dbReference>
<proteinExistence type="inferred from homology"/>
<accession>Q4USG1</accession>
<comment type="function">
    <text evidence="1">Catalyzes the formation of 5-methyl-uridine at position 1939 (m5U1939) in 23S rRNA.</text>
</comment>
<comment type="catalytic activity">
    <reaction evidence="1">
        <text>uridine(1939) in 23S rRNA + S-adenosyl-L-methionine = 5-methyluridine(1939) in 23S rRNA + S-adenosyl-L-homocysteine + H(+)</text>
        <dbReference type="Rhea" id="RHEA:42908"/>
        <dbReference type="Rhea" id="RHEA-COMP:10278"/>
        <dbReference type="Rhea" id="RHEA-COMP:10279"/>
        <dbReference type="ChEBI" id="CHEBI:15378"/>
        <dbReference type="ChEBI" id="CHEBI:57856"/>
        <dbReference type="ChEBI" id="CHEBI:59789"/>
        <dbReference type="ChEBI" id="CHEBI:65315"/>
        <dbReference type="ChEBI" id="CHEBI:74447"/>
        <dbReference type="EC" id="2.1.1.190"/>
    </reaction>
</comment>
<comment type="similarity">
    <text evidence="1">Belongs to the class I-like SAM-binding methyltransferase superfamily. RNA M5U methyltransferase family. RlmD subfamily.</text>
</comment>
<evidence type="ECO:0000255" key="1">
    <source>
        <dbReference type="HAMAP-Rule" id="MF_01010"/>
    </source>
</evidence>